<name>RIPT_POLML</name>
<proteinExistence type="evidence at protein level"/>
<feature type="signal peptide" evidence="8">
    <location>
        <begin position="1"/>
        <end position="39"/>
    </location>
</feature>
<feature type="chain" id="PRO_0000439022" description="PMRIPt A chain" evidence="11">
    <location>
        <begin position="40"/>
        <end position="311"/>
    </location>
</feature>
<feature type="peptide" id="PRO_0000439023" description="Linker peptide" evidence="11">
    <location>
        <begin position="312"/>
        <end position="331"/>
    </location>
</feature>
<feature type="chain" id="PRO_0000439024" description="PMRIPt B chain" evidence="11">
    <location>
        <begin position="332"/>
        <end position="603"/>
    </location>
</feature>
<feature type="domain" description="Ricin B-type lectin 1" evidence="5">
    <location>
        <begin position="338"/>
        <end position="466"/>
    </location>
</feature>
<feature type="repeat" description="1-alpha" evidence="3">
    <location>
        <begin position="348"/>
        <end position="388"/>
    </location>
</feature>
<feature type="repeat" description="1-beta" evidence="3">
    <location>
        <begin position="389"/>
        <end position="430"/>
    </location>
</feature>
<feature type="repeat" description="1-gamma" evidence="3">
    <location>
        <begin position="433"/>
        <end position="466"/>
    </location>
</feature>
<feature type="domain" description="Ricin B-type lectin 2" evidence="5">
    <location>
        <begin position="467"/>
        <end position="593"/>
    </location>
</feature>
<feature type="repeat" description="2-alpha" evidence="3">
    <location>
        <begin position="478"/>
        <end position="516"/>
    </location>
</feature>
<feature type="repeat" description="2-beta" evidence="3">
    <location>
        <begin position="520"/>
        <end position="558"/>
    </location>
</feature>
<feature type="repeat" description="2-gamma" evidence="3">
    <location>
        <begin position="561"/>
        <end position="597"/>
    </location>
</feature>
<feature type="active site" evidence="2">
    <location>
        <position position="208"/>
    </location>
</feature>
<feature type="glycosylation site" description="N-linked (GlcNAc...) asparagine" evidence="6">
    <location>
        <position position="74"/>
    </location>
</feature>
<feature type="glycosylation site" description="N-linked (GlcNAc...) asparagine" evidence="6">
    <location>
        <position position="168"/>
    </location>
</feature>
<feature type="glycosylation site" description="N-linked (GlcNAc...) asparagine" evidence="6">
    <location>
        <position position="356"/>
    </location>
</feature>
<feature type="glycosylation site" description="N-linked (GlcNAc...) asparagine" evidence="6">
    <location>
        <position position="408"/>
    </location>
</feature>
<feature type="glycosylation site" description="N-linked (GlcNAc...) asparagine" evidence="6">
    <location>
        <position position="488"/>
    </location>
</feature>
<feature type="disulfide bond" description="Interchain (between A and B chains)" evidence="4">
    <location>
        <begin position="297"/>
        <end position="335"/>
    </location>
</feature>
<feature type="disulfide bond" evidence="5">
    <location>
        <begin position="351"/>
        <end position="370"/>
    </location>
</feature>
<feature type="disulfide bond" evidence="5">
    <location>
        <begin position="392"/>
        <end position="409"/>
    </location>
</feature>
<feature type="disulfide bond" evidence="5">
    <location>
        <begin position="481"/>
        <end position="497"/>
    </location>
</feature>
<feature type="disulfide bond" evidence="5">
    <location>
        <begin position="523"/>
        <end position="540"/>
    </location>
</feature>
<organism evidence="12">
    <name type="scientific">Polygonatum multiflorum</name>
    <name type="common">Solomon's seal</name>
    <name type="synonym">Convallaria multiflora</name>
    <dbReference type="NCBI Taxonomy" id="45371"/>
    <lineage>
        <taxon>Eukaryota</taxon>
        <taxon>Viridiplantae</taxon>
        <taxon>Streptophyta</taxon>
        <taxon>Embryophyta</taxon>
        <taxon>Tracheophyta</taxon>
        <taxon>Spermatophyta</taxon>
        <taxon>Magnoliopsida</taxon>
        <taxon>Liliopsida</taxon>
        <taxon>Asparagales</taxon>
        <taxon>Asparagaceae</taxon>
        <taxon>Nolinoideae</taxon>
        <taxon>Polygonatum</taxon>
    </lineage>
</organism>
<sequence length="603" mass="66734">MRVVAGILYIVVMAICGLGIQGGTLQDYPSVYFQDSTLQQDFPTIFFNILAGETYGDFIADLREIVTRTADTKNGSIPVLLNPAHPVPVRERFVKVHLTGRNGKTVILALDVTNLYVAAFSANNVAYFFRDFSALERENLFSGMLTIRLSFTSNYVSLEHKAGVGRENISLGPTPLDEACTKSLWSGTTVTEASIAKALLVVIQMVSEAARFRHIEERVRRSFTAADHDQLTFRPDGLMLSMENEWPSMSLEVQRSIEGGIFIGVVQLQDESFQPLRVDNFNTLSRYTMVALLLFRCGHPRATAGTSSTTPAAAQIIRMPVDVLAGEEYYDEETCTVGEPTRRISGLDGLCMDVRNESNNDGIPIQLWPCGAQRNQQWTFHTDGTIQSMGKCMTSNGYHPGDYVMIFNCSTAPVPDATKWVVSIDGSITNPHSGLVLTAPQAAQTTILLVVRNTHSAKQGRSVGDDVEPIVTYIVGFKYMCLQGNNENNTRVWLEDCAVDRPQQWWALYSDGTIRVDSDRSLCVTSDGHSSRDAIIILTCDGGINQRLVFNTDGTILNPNAQLVMDVRQSNVALRQIILYQPTGNPNQQWMTMITRTRPSLTS</sequence>
<evidence type="ECO:0000250" key="1">
    <source>
        <dbReference type="UniProtKB" id="O22415"/>
    </source>
</evidence>
<evidence type="ECO:0000250" key="2">
    <source>
        <dbReference type="UniProtKB" id="P02879"/>
    </source>
</evidence>
<evidence type="ECO:0000250" key="3">
    <source>
        <dbReference type="UniProtKB" id="Q41358"/>
    </source>
</evidence>
<evidence type="ECO:0000255" key="4"/>
<evidence type="ECO:0000255" key="5">
    <source>
        <dbReference type="PROSITE-ProRule" id="PRU00174"/>
    </source>
</evidence>
<evidence type="ECO:0000255" key="6">
    <source>
        <dbReference type="PROSITE-ProRule" id="PRU00498"/>
    </source>
</evidence>
<evidence type="ECO:0000255" key="7">
    <source>
        <dbReference type="RuleBase" id="RU004915"/>
    </source>
</evidence>
<evidence type="ECO:0000269" key="8">
    <source>
    </source>
</evidence>
<evidence type="ECO:0000303" key="9">
    <source>
    </source>
</evidence>
<evidence type="ECO:0000305" key="10"/>
<evidence type="ECO:0000305" key="11">
    <source>
    </source>
</evidence>
<evidence type="ECO:0000312" key="12">
    <source>
        <dbReference type="EMBL" id="AAF37219.1"/>
    </source>
</evidence>
<dbReference type="EC" id="3.2.2.22" evidence="7 8"/>
<dbReference type="EMBL" id="AF213984">
    <property type="protein sequence ID" value="AAF37219.1"/>
    <property type="molecule type" value="Genomic_DNA"/>
</dbReference>
<dbReference type="SMR" id="Q9M653"/>
<dbReference type="CAZy" id="CBM13">
    <property type="family name" value="Carbohydrate-Binding Module Family 13"/>
</dbReference>
<dbReference type="GlyCosmos" id="Q9M653">
    <property type="glycosylation" value="5 sites, No reported glycans"/>
</dbReference>
<dbReference type="GO" id="GO:0030246">
    <property type="term" value="F:carbohydrate binding"/>
    <property type="evidence" value="ECO:0007669"/>
    <property type="project" value="UniProtKB-KW"/>
</dbReference>
<dbReference type="GO" id="GO:0030598">
    <property type="term" value="F:rRNA N-glycosylase activity"/>
    <property type="evidence" value="ECO:0000314"/>
    <property type="project" value="UniProtKB"/>
</dbReference>
<dbReference type="GO" id="GO:0090729">
    <property type="term" value="F:toxin activity"/>
    <property type="evidence" value="ECO:0007669"/>
    <property type="project" value="UniProtKB-KW"/>
</dbReference>
<dbReference type="GO" id="GO:0006952">
    <property type="term" value="P:defense response"/>
    <property type="evidence" value="ECO:0007669"/>
    <property type="project" value="UniProtKB-KW"/>
</dbReference>
<dbReference type="GO" id="GO:0017148">
    <property type="term" value="P:negative regulation of translation"/>
    <property type="evidence" value="ECO:0007669"/>
    <property type="project" value="UniProtKB-KW"/>
</dbReference>
<dbReference type="CDD" id="cd23483">
    <property type="entry name" value="beta-trefoil_Ricin_ebulin-like_rpt1"/>
    <property type="match status" value="1"/>
</dbReference>
<dbReference type="CDD" id="cd23490">
    <property type="entry name" value="beta-trefoil_Ricin_ebulin-like_rpt2"/>
    <property type="match status" value="1"/>
</dbReference>
<dbReference type="FunFam" id="4.10.470.10:FF:000003">
    <property type="entry name" value="Ribosome-inactivating protein PMRIPt"/>
    <property type="match status" value="1"/>
</dbReference>
<dbReference type="Gene3D" id="2.80.10.50">
    <property type="match status" value="2"/>
</dbReference>
<dbReference type="Gene3D" id="3.40.420.10">
    <property type="entry name" value="Ricin (A subunit), domain 1"/>
    <property type="match status" value="1"/>
</dbReference>
<dbReference type="Gene3D" id="4.10.470.10">
    <property type="entry name" value="Ricin (A Subunit), domain 2"/>
    <property type="match status" value="1"/>
</dbReference>
<dbReference type="InterPro" id="IPR036041">
    <property type="entry name" value="Ribosome-inact_prot_sf"/>
</dbReference>
<dbReference type="InterPro" id="IPR017989">
    <property type="entry name" value="Ribosome_inactivat_1/2"/>
</dbReference>
<dbReference type="InterPro" id="IPR001574">
    <property type="entry name" value="Ribosome_inactivat_prot"/>
</dbReference>
<dbReference type="InterPro" id="IPR017988">
    <property type="entry name" value="Ribosome_inactivat_prot_CS"/>
</dbReference>
<dbReference type="InterPro" id="IPR016138">
    <property type="entry name" value="Ribosome_inactivat_prot_sub1"/>
</dbReference>
<dbReference type="InterPro" id="IPR016139">
    <property type="entry name" value="Ribosome_inactivat_prot_sub2"/>
</dbReference>
<dbReference type="InterPro" id="IPR035992">
    <property type="entry name" value="Ricin_B-like_lectins"/>
</dbReference>
<dbReference type="InterPro" id="IPR000772">
    <property type="entry name" value="Ricin_B_lectin"/>
</dbReference>
<dbReference type="PANTHER" id="PTHR33453">
    <property type="match status" value="1"/>
</dbReference>
<dbReference type="PANTHER" id="PTHR33453:SF34">
    <property type="entry name" value="RIBOSOME-INACTIVATING PROTEIN"/>
    <property type="match status" value="1"/>
</dbReference>
<dbReference type="Pfam" id="PF00652">
    <property type="entry name" value="Ricin_B_lectin"/>
    <property type="match status" value="2"/>
</dbReference>
<dbReference type="Pfam" id="PF00161">
    <property type="entry name" value="RIP"/>
    <property type="match status" value="1"/>
</dbReference>
<dbReference type="PRINTS" id="PR00396">
    <property type="entry name" value="SHIGARICIN"/>
</dbReference>
<dbReference type="SMART" id="SM00458">
    <property type="entry name" value="RICIN"/>
    <property type="match status" value="2"/>
</dbReference>
<dbReference type="SUPFAM" id="SSF56371">
    <property type="entry name" value="Ribosome inactivating proteins (RIP)"/>
    <property type="match status" value="1"/>
</dbReference>
<dbReference type="SUPFAM" id="SSF50370">
    <property type="entry name" value="Ricin B-like lectins"/>
    <property type="match status" value="2"/>
</dbReference>
<dbReference type="PROSITE" id="PS50231">
    <property type="entry name" value="RICIN_B_LECTIN"/>
    <property type="match status" value="2"/>
</dbReference>
<dbReference type="PROSITE" id="PS00275">
    <property type="entry name" value="SHIGA_RICIN"/>
    <property type="match status" value="1"/>
</dbReference>
<accession>Q9M653</accession>
<keyword id="KW-0903">Direct protein sequencing</keyword>
<keyword id="KW-1015">Disulfide bond</keyword>
<keyword id="KW-0325">Glycoprotein</keyword>
<keyword id="KW-0378">Hydrolase</keyword>
<keyword id="KW-0430">Lectin</keyword>
<keyword id="KW-0611">Plant defense</keyword>
<keyword id="KW-0652">Protein synthesis inhibitor</keyword>
<keyword id="KW-0677">Repeat</keyword>
<keyword id="KW-0732">Signal</keyword>
<keyword id="KW-0800">Toxin</keyword>
<comment type="function">
    <text evidence="1 8 10">GalNAc-specific agglutinin. Behaves as a type-2 ribosome-inactivating protein. Inhibits mammalian ribosomes (PubMed:10785398). The A chain is responsible for inhibiting protein synthesis through the catalytic inactivation of 60S ribosomal subunits by removing adenine from position 4,324 of 28S rRNA (Probable). The B chain binds to cell receptors and probably facilitates the entry into the cell of the A chain; B chains are also responsible for cell agglutination (lectin activity) (Probable). Involved in plant defense against insects (By similarity). Has very low cytotoxic activity against the human tumor cell lines CEM and Molt4 (PubMed:10785398).</text>
</comment>
<comment type="catalytic activity">
    <reaction evidence="4 7 8">
        <text>Endohydrolysis of the N-glycosidic bond at one specific adenosine on the 28S rRNA.</text>
        <dbReference type="EC" id="3.2.2.22"/>
    </reaction>
</comment>
<comment type="activity regulation">
    <text evidence="8">Strongly inhibited by asialofetuin and asialomucin.</text>
</comment>
<comment type="subunit">
    <text evidence="8">Tetramer of four pairs of disulfide bound A-B chains.</text>
</comment>
<comment type="tissue specificity">
    <text evidence="8">Expressed in rhizome and more abundantly in leaves (at protein level).</text>
</comment>
<comment type="domain">
    <text evidence="3">The B-chain consists of six tandemly repeated subdomains. Only subdomains 1-alpha and 2-gamma possess a functional carbohydrate-binding site.</text>
</comment>
<comment type="PTM">
    <text evidence="8">The precursor is processed in two chains, A and B, that are linked by a disulfide bond.</text>
</comment>
<comment type="PTM">
    <text evidence="8">Glycosylated.</text>
</comment>
<comment type="similarity">
    <text evidence="10">Belongs to the ribosome-inactivating protein family. Type 2 RIP subfamily.</text>
</comment>
<gene>
    <name evidence="12" type="primary">RIPt</name>
</gene>
<protein>
    <recommendedName>
        <fullName evidence="9">Ribosome-inactivating protein PMRIPt</fullName>
    </recommendedName>
    <component>
        <recommendedName>
            <fullName evidence="9">PMRIPt A chain</fullName>
        </recommendedName>
        <alternativeName>
            <fullName evidence="7 9">rRNA N-glycosidase</fullName>
            <ecNumber evidence="7 8">3.2.2.22</ecNumber>
        </alternativeName>
    </component>
    <component>
        <recommendedName>
            <fullName evidence="9">Linker peptide</fullName>
        </recommendedName>
    </component>
    <component>
        <recommendedName>
            <fullName evidence="9">PMRIPt B chain</fullName>
        </recommendedName>
    </component>
</protein>
<reference evidence="12" key="1">
    <citation type="journal article" date="2000" name="Eur. J. Biochem.">
        <title>Characterization and molecular cloning of two different type 2 ribosome-inactivating proteins from the monocotyledonous plant Polygonatum multiflorum.</title>
        <authorList>
            <person name="Van Damme E.J."/>
            <person name="Hao Q."/>
            <person name="Charels D."/>
            <person name="Barre A."/>
            <person name="Rouge P."/>
            <person name="Van Leuven F."/>
            <person name="Peumans W.J."/>
        </authorList>
    </citation>
    <scope>NUCLEOTIDE SEQUENCE [GENOMIC DNA]</scope>
    <scope>PROTEIN SEQUENCE OF 40-55 AND 332-342</scope>
    <scope>FUNCTION</scope>
    <scope>CATALYTIC ACTIVITY</scope>
    <scope>ACTIVITY REGULATION</scope>
    <scope>SUBUNIT</scope>
    <scope>TISSUE SPECIFICITY</scope>
    <scope>PTM</scope>
    <scope>GLYCOSYLATION</scope>
    <scope>3D-STRUCTURE MODELING</scope>
    <scope>PHYLOGENETIC ANALYSIS</scope>
    <source>
        <tissue evidence="9">Meristem</tissue>
    </source>
</reference>